<keyword id="KW-0002">3D-structure</keyword>
<keyword id="KW-0903">Direct protein sequencing</keyword>
<keyword id="KW-1015">Disulfide bond</keyword>
<keyword id="KW-0964">Secreted</keyword>
<keyword id="KW-0800">Toxin</keyword>
<accession>P0C1Z0</accession>
<accession>P01403</accession>
<reference key="1">
    <citation type="journal article" date="1973" name="J. Biol. Chem.">
        <title>Snake venom toxins. The purification and amino acid sequence of toxin F-VII from Dendroaspis angusticeps venom.</title>
        <authorList>
            <person name="Viljoen C.C."/>
            <person name="Botes D.P."/>
        </authorList>
    </citation>
    <scope>PROTEIN SEQUENCE</scope>
    <scope>SUBCELLULAR LOCATION</scope>
    <source>
        <tissue>Venom</tissue>
    </source>
</reference>
<reference key="2">
    <citation type="journal article" date="1984" name="J. Physiol. (Paris)">
        <title>Fasciculins, anticholinesterase toxins from the venom of the green mamba Dendroaspis angusticeps.</title>
        <authorList>
            <person name="Karlsson E."/>
            <person name="Mbugua P.M."/>
            <person name="Rodriguez-Ithurralde D."/>
        </authorList>
    </citation>
    <scope>FUNCTION</scope>
</reference>
<reference key="3">
    <citation type="journal article" date="1997" name="J. Biol. Chem.">
        <title>Expression and activity of mutants of fasciculin, a peptidic acetylcholinesterase inhibitor from mamba venom.</title>
        <authorList>
            <person name="Marchot P."/>
            <person name="Prowse C.N."/>
            <person name="Kanter J."/>
            <person name="Camp S."/>
            <person name="Ackermann E.J."/>
            <person name="Radic Z."/>
            <person name="Bougis P.E."/>
            <person name="Taylor P."/>
        </authorList>
    </citation>
    <scope>SYNTHESIS</scope>
    <scope>MUTAGENESIS OF 8-THR-THR-9; ARG-11; ARG-24; LYS-25; ARG-27; ARG-28; HIS-29; PRO-30; PRO-31; LYS-32; MET-33; 34-VAL-LEU-35; ASP-45 AND LYS-51</scope>
</reference>
<reference key="4">
    <citation type="journal article" date="2009" name="Protein Eng. Des. Sel.">
        <title>Design, expression and characterization of mutants of fasciculin optimized for interaction with its target, acetylcholinesterase.</title>
        <authorList>
            <person name="Sharabi O."/>
            <person name="Peleg Y."/>
            <person name="Mashiach E."/>
            <person name="Vardy E."/>
            <person name="Ashani Y."/>
            <person name="Silman I."/>
            <person name="Sussman J.L."/>
            <person name="Shifman J.M."/>
        </authorList>
    </citation>
    <scope>MUTAGENESIS OF THR-8; THR-9; ARG-11; HIS-29 AND LYS-32</scope>
</reference>
<reference key="5">
    <citation type="journal article" date="1989" name="J. Biol. Chem.">
        <title>Crystals of fasciculin 2 from green mamba snake venom. Preparation and preliminary X-ray analysis.</title>
        <authorList>
            <person name="le Du M.H."/>
            <person name="Marchot P."/>
            <person name="Bougis P.E."/>
            <person name="Fontecilla-Camps J.-C."/>
        </authorList>
    </citation>
    <scope>PRELIMINARY CRYSTALLIZATION</scope>
</reference>
<reference key="6">
    <citation type="journal article" date="1996" name="Acta Crystallogr. D">
        <title>Structure of fasciculin 2 from green mamba snake venom: evidence for unusual loop flexibility.</title>
        <authorList>
            <person name="le Du M.-H."/>
            <person name="Housset D."/>
            <person name="Marchot P."/>
            <person name="Bougis P.E."/>
            <person name="Navaza J."/>
            <person name="Fontecilla-Camps J.-C."/>
        </authorList>
    </citation>
    <scope>X-RAY CRYSTALLOGRAPHY (2.0 ANGSTROMS)</scope>
    <scope>DISULFIDE BONDS</scope>
</reference>
<reference key="7">
    <citation type="journal article" date="1995" name="Structure">
        <title>Crystal structure of an acetylcholinesterase-fasciculin complex: interaction of a three-fingered toxin from snake venom with its target.</title>
        <authorList>
            <person name="Harel M."/>
            <person name="Kleywegt G.J."/>
            <person name="Ravelli R.B."/>
            <person name="Silman I."/>
            <person name="Sussman J.L."/>
        </authorList>
    </citation>
    <scope>X-RAY CRYSTALLOGRAPHY (3.0 ANGSTROMS) IN COMPLEX WITH ACHE</scope>
    <scope>DISULFIDE BONDS</scope>
</reference>
<reference key="8">
    <citation type="journal article" date="1995" name="Cell">
        <title>Acetylcholinesterase inhibition by fasciculin: crystal structure of the complex.</title>
        <authorList>
            <person name="Bourne Y."/>
            <person name="Taylor P."/>
            <person name="Marchot P."/>
        </authorList>
    </citation>
    <scope>X-RAY CRYSTALLOGRAPHY (3.2 ANGSTROMS) IN COMPLEX WITH ACHE</scope>
    <scope>DISULFIDE BONDS</scope>
</reference>
<reference key="9">
    <citation type="journal article" date="2000" name="Acta Crystallogr. D">
        <title>Structures of recombinant native and E202Q mutant human acetylcholinesterase complexed with the snake-venom toxin fasciculin-II.</title>
        <authorList>
            <person name="Kryger G."/>
            <person name="Harel M."/>
            <person name="Giles K."/>
            <person name="Toker L."/>
            <person name="Velan B."/>
            <person name="Lazar A."/>
            <person name="Kronman C."/>
            <person name="Barak D."/>
            <person name="Ariel N."/>
            <person name="Shafferman A."/>
            <person name="Silman I."/>
            <person name="Sussman J.L."/>
        </authorList>
    </citation>
    <scope>X-RAY CRYSTALLOGRAPHY (2.76 ANGSTROMS) IN COMPLEX WITH ACHE</scope>
    <scope>DISULFIDE BOND</scope>
</reference>
<reference key="10">
    <citation type="journal article" date="2003" name="EMBO J.">
        <title>Structural insights into ligand interactions at the acetylcholinesterase peripheral anionic site.</title>
        <authorList>
            <person name="Bourne Y."/>
            <person name="Taylor P."/>
            <person name="Radic Z."/>
            <person name="Marchot P."/>
        </authorList>
    </citation>
    <scope>X-RAY CRYSTALLOGRAPHY (2.5 ANGSTROMS)</scope>
    <scope>DISULFIDE BOND</scope>
</reference>
<reference key="11">
    <citation type="journal article" date="2010" name="J. Med. Chem.">
        <title>Structural evidence that human acetylcholinesterase inhibited by tabun ages through O-dealkylation.</title>
        <authorList>
            <person name="Carletti E."/>
            <person name="Colletier J.P."/>
            <person name="Dupeux F."/>
            <person name="Trovaslet M."/>
            <person name="Masson P."/>
            <person name="Nachon F."/>
        </authorList>
    </citation>
    <scope>X-RAY CRYSTALLOGRAPHY (2.95 ANGSTROMS) IN COMPLEX WITH ACHE</scope>
    <scope>DISULFIDE BOND</scope>
</reference>
<reference key="12">
    <citation type="journal article" date="2012" name="J. Med. Chem.">
        <title>Structures of human acetylcholinesterase in complex with pharmacologically important ligands.</title>
        <authorList>
            <person name="Cheung J."/>
            <person name="Rudolph M.J."/>
            <person name="Burshteyn F."/>
            <person name="Cassidy M.S."/>
            <person name="Gary E.N."/>
            <person name="Love J."/>
            <person name="Franklin M.C."/>
            <person name="Height J.J."/>
        </authorList>
    </citation>
    <scope>X-RAY CRYSTALLOGRAPHY (2.60 ANGSTROMS) IN COMPLEX WITH ACHE</scope>
    <scope>DISULFIDE BOND</scope>
</reference>
<reference key="13">
    <citation type="journal article" date="2013" name="Biochem. J.">
        <title>Crystal structures of human cholinesterases in complex with huprine W and tacrine: elements of specificity for anti-Alzheimer's drugs targeting acetyl- and butyryl-cholinesterase.</title>
        <authorList>
            <person name="Nachon F."/>
            <person name="Carletti E."/>
            <person name="Ronco C."/>
            <person name="Trovaslet M."/>
            <person name="Nicolet Y."/>
            <person name="Jean L."/>
            <person name="Renard P.Y."/>
        </authorList>
    </citation>
    <scope>X-RAY CRYSTALLOGRAPHY (3.10 ANGSTROMS) IN COMPLEX WITH ACHE</scope>
    <scope>DISULFIDE BOND</scope>
</reference>
<evidence type="ECO:0000269" key="1">
    <source>
    </source>
</evidence>
<evidence type="ECO:0000269" key="2">
    <source>
    </source>
</evidence>
<evidence type="ECO:0000269" key="3">
    <source>
    </source>
</evidence>
<evidence type="ECO:0000269" key="4">
    <source>
    </source>
</evidence>
<evidence type="ECO:0000269" key="5">
    <source>
    </source>
</evidence>
<evidence type="ECO:0000269" key="6">
    <source>
    </source>
</evidence>
<evidence type="ECO:0000269" key="7">
    <source>
    </source>
</evidence>
<evidence type="ECO:0000269" key="8">
    <source>
    </source>
</evidence>
<evidence type="ECO:0000269" key="9">
    <source>
    </source>
</evidence>
<evidence type="ECO:0000269" key="10">
    <source>
    </source>
</evidence>
<evidence type="ECO:0000269" key="11">
    <source>
    </source>
</evidence>
<evidence type="ECO:0000269" key="12">
    <source>
    </source>
</evidence>
<evidence type="ECO:0000303" key="13">
    <source>
    </source>
</evidence>
<evidence type="ECO:0000303" key="14">
    <source>
    </source>
</evidence>
<evidence type="ECO:0000303" key="15">
    <source>
    </source>
</evidence>
<evidence type="ECO:0000303" key="16">
    <source>
    </source>
</evidence>
<evidence type="ECO:0000303" key="17">
    <source>
    </source>
</evidence>
<evidence type="ECO:0000303" key="18">
    <source>
    </source>
</evidence>
<evidence type="ECO:0000305" key="19"/>
<evidence type="ECO:0000312" key="20">
    <source>
        <dbReference type="PDB" id="1B41"/>
    </source>
</evidence>
<evidence type="ECO:0000312" key="21">
    <source>
        <dbReference type="PDB" id="1F8U"/>
    </source>
</evidence>
<evidence type="ECO:0000312" key="22">
    <source>
        <dbReference type="PDB" id="1FSC"/>
    </source>
</evidence>
<evidence type="ECO:0000312" key="23">
    <source>
        <dbReference type="PDB" id="1FSS"/>
    </source>
</evidence>
<evidence type="ECO:0000312" key="24">
    <source>
        <dbReference type="PDB" id="1KU6"/>
    </source>
</evidence>
<evidence type="ECO:0000312" key="25">
    <source>
        <dbReference type="PDB" id="1MAH"/>
    </source>
</evidence>
<evidence type="ECO:0000312" key="26">
    <source>
        <dbReference type="PDB" id="2X8B"/>
    </source>
</evidence>
<evidence type="ECO:0000312" key="27">
    <source>
        <dbReference type="PDB" id="4BDT"/>
    </source>
</evidence>
<evidence type="ECO:0000312" key="28">
    <source>
        <dbReference type="PDB" id="4EY8"/>
    </source>
</evidence>
<evidence type="ECO:0007829" key="29">
    <source>
        <dbReference type="PDB" id="1FSC"/>
    </source>
</evidence>
<comment type="function">
    <text evidence="9">Interferes with neuromuscular transmission by inhibiting the enzyme acetylcholinesterase (AChE) present at the neuromuscular junction. It selectively binds and inhibits with a 1:1 stoichiometry the mammalian and electric fish AChE at picomolar concentrations. It is highly specific for the peripheral site of AChE and blocks the entry of acetylcholine into the active site of the enzyme (through the Met-33 residue), thereby preventing its breakdown. It has been called fasciculin since after injection into mice it causes severe, generalized and long-lasting (5-7 hours) fasciculations.</text>
</comment>
<comment type="subcellular location">
    <subcellularLocation>
        <location evidence="8">Secreted</location>
    </subcellularLocation>
</comment>
<comment type="tissue specificity">
    <text evidence="19">Expressed by the venom gland.</text>
</comment>
<comment type="toxic dose">
    <text>LD(50) is &gt;20 mg/kg by intravenous injection.</text>
</comment>
<comment type="similarity">
    <text evidence="19">Belongs to the three-finger toxin family. Short-chain subfamily. Acn-esterase inhibitor sub-subfamily.</text>
</comment>
<organism>
    <name type="scientific">Dendroaspis angusticeps</name>
    <name type="common">Eastern green mamba</name>
    <name type="synonym">Naja angusticeps</name>
    <dbReference type="NCBI Taxonomy" id="8618"/>
    <lineage>
        <taxon>Eukaryota</taxon>
        <taxon>Metazoa</taxon>
        <taxon>Chordata</taxon>
        <taxon>Craniata</taxon>
        <taxon>Vertebrata</taxon>
        <taxon>Euteleostomi</taxon>
        <taxon>Lepidosauria</taxon>
        <taxon>Squamata</taxon>
        <taxon>Bifurcata</taxon>
        <taxon>Unidentata</taxon>
        <taxon>Episquamata</taxon>
        <taxon>Toxicofera</taxon>
        <taxon>Serpentes</taxon>
        <taxon>Colubroidea</taxon>
        <taxon>Elapidae</taxon>
        <taxon>Elapinae</taxon>
        <taxon>Dendroaspis</taxon>
    </lineage>
</organism>
<protein>
    <recommendedName>
        <fullName evidence="14 17 18">Fasciculin-2</fullName>
        <shortName>Fas-2</shortName>
        <shortName evidence="18">Fas2</shortName>
    </recommendedName>
    <alternativeName>
        <fullName evidence="16">Acetylcholinesterase toxin F-VII</fullName>
    </alternativeName>
    <alternativeName>
        <fullName evidence="13">Fasciculin-II</fullName>
        <shortName evidence="13">FAS-II</shortName>
    </alternativeName>
    <alternativeName>
        <fullName>Toxin TA1</fullName>
    </alternativeName>
</protein>
<proteinExistence type="evidence at protein level"/>
<name>3SE2_DENAN</name>
<dbReference type="PIR" id="A01674">
    <property type="entry name" value="T4EP1A"/>
</dbReference>
<dbReference type="PDB" id="1B41">
    <property type="method" value="X-ray"/>
    <property type="resolution" value="2.76 A"/>
    <property type="chains" value="B=1-61"/>
</dbReference>
<dbReference type="PDB" id="1F8U">
    <property type="method" value="X-ray"/>
    <property type="resolution" value="2.90 A"/>
    <property type="chains" value="B=1-61"/>
</dbReference>
<dbReference type="PDB" id="1FSC">
    <property type="method" value="X-ray"/>
    <property type="resolution" value="2.00 A"/>
    <property type="chains" value="A=1-61"/>
</dbReference>
<dbReference type="PDB" id="1FSS">
    <property type="method" value="X-ray"/>
    <property type="resolution" value="3.00 A"/>
    <property type="chains" value="B=1-61"/>
</dbReference>
<dbReference type="PDB" id="1KU6">
    <property type="method" value="X-ray"/>
    <property type="resolution" value="2.50 A"/>
    <property type="chains" value="B=1-61"/>
</dbReference>
<dbReference type="PDB" id="1MAH">
    <property type="method" value="X-ray"/>
    <property type="resolution" value="3.20 A"/>
    <property type="chains" value="F=1-61"/>
</dbReference>
<dbReference type="PDB" id="2X8B">
    <property type="method" value="X-ray"/>
    <property type="resolution" value="2.95 A"/>
    <property type="chains" value="B=1-61"/>
</dbReference>
<dbReference type="PDB" id="4BDT">
    <property type="method" value="X-ray"/>
    <property type="resolution" value="3.10 A"/>
    <property type="chains" value="B=1-61"/>
</dbReference>
<dbReference type="PDB" id="4EY8">
    <property type="method" value="X-ray"/>
    <property type="resolution" value="2.60 A"/>
    <property type="chains" value="B=1-61"/>
</dbReference>
<dbReference type="PDBsum" id="1B41"/>
<dbReference type="PDBsum" id="1F8U"/>
<dbReference type="PDBsum" id="1FSC"/>
<dbReference type="PDBsum" id="1FSS"/>
<dbReference type="PDBsum" id="1KU6"/>
<dbReference type="PDBsum" id="1MAH"/>
<dbReference type="PDBsum" id="2X8B"/>
<dbReference type="PDBsum" id="4BDT"/>
<dbReference type="PDBsum" id="4EY8"/>
<dbReference type="SMR" id="P0C1Z0"/>
<dbReference type="EvolutionaryTrace" id="P0C1Z0"/>
<dbReference type="GO" id="GO:0005576">
    <property type="term" value="C:extracellular region"/>
    <property type="evidence" value="ECO:0007669"/>
    <property type="project" value="UniProtKB-SubCell"/>
</dbReference>
<dbReference type="GO" id="GO:0090729">
    <property type="term" value="F:toxin activity"/>
    <property type="evidence" value="ECO:0007669"/>
    <property type="project" value="UniProtKB-KW"/>
</dbReference>
<dbReference type="CDD" id="cd00206">
    <property type="entry name" value="TFP_snake_toxin"/>
    <property type="match status" value="1"/>
</dbReference>
<dbReference type="Gene3D" id="2.10.60.10">
    <property type="entry name" value="CD59"/>
    <property type="match status" value="1"/>
</dbReference>
<dbReference type="InterPro" id="IPR003571">
    <property type="entry name" value="Snake_3FTx"/>
</dbReference>
<dbReference type="InterPro" id="IPR045860">
    <property type="entry name" value="Snake_toxin-like_sf"/>
</dbReference>
<dbReference type="InterPro" id="IPR018354">
    <property type="entry name" value="Snake_toxin_con_site"/>
</dbReference>
<dbReference type="InterPro" id="IPR054131">
    <property type="entry name" value="Toxin_cobra-type"/>
</dbReference>
<dbReference type="Pfam" id="PF21947">
    <property type="entry name" value="Toxin_cobra-type"/>
    <property type="match status" value="1"/>
</dbReference>
<dbReference type="SUPFAM" id="SSF57302">
    <property type="entry name" value="Snake toxin-like"/>
    <property type="match status" value="1"/>
</dbReference>
<dbReference type="PROSITE" id="PS00272">
    <property type="entry name" value="SNAKE_TOXIN"/>
    <property type="match status" value="1"/>
</dbReference>
<sequence>TMCYSHTTTSRAILTNCGENSCYRKSRRHPPKMVLGRGCGCPPGDDNLEVKCCTSPDKCNY</sequence>
<feature type="chain" id="PRO_0000253031" description="Fasciculin-2" evidence="8">
    <location>
        <begin position="1"/>
        <end position="61"/>
    </location>
</feature>
<feature type="site" description="Blocks the entrance of the active site gorge of hAChE" evidence="15">
    <location>
        <position position="33"/>
    </location>
</feature>
<feature type="disulfide bond" evidence="1 2 3 5 6 7 10 11 20 21 22 23 24 25 26 27 28">
    <location>
        <begin position="3"/>
        <end position="22"/>
    </location>
</feature>
<feature type="disulfide bond" evidence="1 2 3 5 6 7 10 11 20 21 22 23 24 25 26 27 28">
    <location>
        <begin position="17"/>
        <end position="39"/>
    </location>
</feature>
<feature type="disulfide bond" evidence="1 2 3 5 6 7 10 11 20 21 22 23 24 25 26 27 28">
    <location>
        <begin position="41"/>
        <end position="52"/>
    </location>
</feature>
<feature type="disulfide bond" evidence="1 2 3 5 6 7 10 11 20 21 22 23 24 25 26 27 28">
    <location>
        <begin position="53"/>
        <end position="59"/>
    </location>
</feature>
<feature type="mutagenesis site" description="18-fold increase in inhibition potency." evidence="12">
    <original>TT</original>
    <variation>AA</variation>
    <location>
        <begin position="8"/>
        <end position="9"/>
    </location>
</feature>
<feature type="mutagenesis site" description="2.5-fold increase in affinity for TcAChE. 2.1-fold decrease in affinity for TcAChE; when associated with N-9. 1.9-fold increase in affinity for TcAChE; when associated with N-9, K-11 and R-29 [FasDesK32]. 3.9-fold decrease in affinity for TcAChE; when associated with N-9, K-11, R-29 and R-32 [FasDes]." evidence="4">
    <original>T</original>
    <variation>V</variation>
    <location>
        <position position="8"/>
    </location>
</feature>
<feature type="mutagenesis site" description="9.0-fold decrease in affinity for TcAChE. 2.1-fold decrease in affinity for TcAChE; when associated with V-8. 1.9-fold increase in affinity for TcAChE; when associated with V-8, K-11 and R-29 [FasDesK32]. 3.9-fold decrease in affinity for TcAChE; when associated with V-8, K-11, R-29 and R-32 [FasDes]." evidence="4">
    <original>T</original>
    <variation>N</variation>
    <location>
        <position position="9"/>
    </location>
</feature>
<feature type="mutagenesis site" description="1.7-fold decrease in affinity for TcAChE. 1.9-fold increase in affinity for TcAChE; when associated with V-8, N-9 and R-29 [FasDesK32]. 3.9-fold decrease in affinity for TcAChE; when associated with V-8, N-9, R-29 and R-32 [FasDes]." evidence="4">
    <original>R</original>
    <variation>K</variation>
    <location>
        <position position="11"/>
    </location>
</feature>
<feature type="mutagenesis site" description="6-fold increase in inhibition potency." evidence="12">
    <original>R</original>
    <variation>Q</variation>
    <location>
        <position position="11"/>
    </location>
</feature>
<feature type="mutagenesis site" description="13-fold decrease in inhibition potency." evidence="12">
    <original>R</original>
    <variation>T</variation>
    <location>
        <position position="24"/>
    </location>
</feature>
<feature type="mutagenesis site" description="No significant difference in inhibition potency." evidence="12">
    <original>K</original>
    <variation>L</variation>
    <location>
        <position position="25"/>
    </location>
</feature>
<feature type="mutagenesis site" description="49-fold decrease in inhibition potency." evidence="12">
    <original>R</original>
    <variation>W</variation>
    <location>
        <position position="27"/>
    </location>
</feature>
<feature type="mutagenesis site" description="No significant difference in inhibition potency." evidence="12">
    <original>R</original>
    <variation>D</variation>
    <location>
        <position position="28"/>
    </location>
</feature>
<feature type="mutagenesis site" description="73-fold increase in inhibition potency." evidence="12">
    <original>H</original>
    <variation>D</variation>
    <location>
        <position position="29"/>
    </location>
</feature>
<feature type="mutagenesis site" description="6.0-fold increase in affinity for TcAChE. 1.9-fold increase in affinity for TcAChE; when associated with V-8, N-9 and K-11 [FasDesK32]. 3.9-fold decrease in affinity for TcAChE; when associated with V-8, N-9, K-11 and R-32 [FasDes]." evidence="4">
    <original>H</original>
    <variation>R</variation>
    <location>
        <position position="29"/>
    </location>
</feature>
<feature type="mutagenesis site" description="192-fold decrease in inhibition potency." evidence="12">
    <location>
        <position position="30"/>
    </location>
</feature>
<feature type="mutagenesis site" description="625-fold decrease in inhibition potency." evidence="12">
    <original>P</original>
    <variation>R</variation>
    <location>
        <position position="31"/>
    </location>
</feature>
<feature type="mutagenesis site" description="3-fold decrease in inhibition potency." evidence="12">
    <original>K</original>
    <variation>G</variation>
    <location>
        <position position="32"/>
    </location>
</feature>
<feature type="mutagenesis site" description="7.4-fold decrease in affinity for TcAChE. 3.9-fold decrease in affinity for TcAChE; when associated with V-8, N-9, K-11 and R-29 [FasDes]." evidence="4">
    <original>K</original>
    <variation>R</variation>
    <location>
        <position position="32"/>
    </location>
</feature>
<feature type="mutagenesis site" description="8-fold decrease in inhibition potency." evidence="12">
    <original>M</original>
    <variation>A</variation>
    <location>
        <position position="33"/>
    </location>
</feature>
<feature type="mutagenesis site" description="No significant difference in inhibition potency." evidence="12">
    <original>VL</original>
    <variation>AA</variation>
    <location>
        <begin position="34"/>
        <end position="35"/>
    </location>
</feature>
<feature type="mutagenesis site" description="No significant difference in inhibition potency." evidence="12">
    <original>D</original>
    <variation>K</variation>
    <location>
        <position position="45"/>
    </location>
</feature>
<feature type="mutagenesis site" description="No significant difference in inhibition potency." evidence="12">
    <original>K</original>
    <variation>S</variation>
    <location>
        <position position="51"/>
    </location>
</feature>
<feature type="strand" evidence="29">
    <location>
        <begin position="2"/>
        <end position="6"/>
    </location>
</feature>
<feature type="strand" evidence="29">
    <location>
        <begin position="8"/>
        <end position="10"/>
    </location>
</feature>
<feature type="strand" evidence="29">
    <location>
        <begin position="13"/>
        <end position="16"/>
    </location>
</feature>
<feature type="strand" evidence="29">
    <location>
        <begin position="22"/>
        <end position="31"/>
    </location>
</feature>
<feature type="strand" evidence="29">
    <location>
        <begin position="34"/>
        <end position="40"/>
    </location>
</feature>
<feature type="strand" evidence="29">
    <location>
        <begin position="46"/>
        <end position="53"/>
    </location>
</feature>
<feature type="turn" evidence="29">
    <location>
        <begin position="57"/>
        <end position="60"/>
    </location>
</feature>